<reference key="1">
    <citation type="journal article" date="2001" name="Science">
        <title>Comparative genomics of Listeria species.</title>
        <authorList>
            <person name="Glaser P."/>
            <person name="Frangeul L."/>
            <person name="Buchrieser C."/>
            <person name="Rusniok C."/>
            <person name="Amend A."/>
            <person name="Baquero F."/>
            <person name="Berche P."/>
            <person name="Bloecker H."/>
            <person name="Brandt P."/>
            <person name="Chakraborty T."/>
            <person name="Charbit A."/>
            <person name="Chetouani F."/>
            <person name="Couve E."/>
            <person name="de Daruvar A."/>
            <person name="Dehoux P."/>
            <person name="Domann E."/>
            <person name="Dominguez-Bernal G."/>
            <person name="Duchaud E."/>
            <person name="Durant L."/>
            <person name="Dussurget O."/>
            <person name="Entian K.-D."/>
            <person name="Fsihi H."/>
            <person name="Garcia-del Portillo F."/>
            <person name="Garrido P."/>
            <person name="Gautier L."/>
            <person name="Goebel W."/>
            <person name="Gomez-Lopez N."/>
            <person name="Hain T."/>
            <person name="Hauf J."/>
            <person name="Jackson D."/>
            <person name="Jones L.-M."/>
            <person name="Kaerst U."/>
            <person name="Kreft J."/>
            <person name="Kuhn M."/>
            <person name="Kunst F."/>
            <person name="Kurapkat G."/>
            <person name="Madueno E."/>
            <person name="Maitournam A."/>
            <person name="Mata Vicente J."/>
            <person name="Ng E."/>
            <person name="Nedjari H."/>
            <person name="Nordsiek G."/>
            <person name="Novella S."/>
            <person name="de Pablos B."/>
            <person name="Perez-Diaz J.-C."/>
            <person name="Purcell R."/>
            <person name="Remmel B."/>
            <person name="Rose M."/>
            <person name="Schlueter T."/>
            <person name="Simoes N."/>
            <person name="Tierrez A."/>
            <person name="Vazquez-Boland J.-A."/>
            <person name="Voss H."/>
            <person name="Wehland J."/>
            <person name="Cossart P."/>
        </authorList>
    </citation>
    <scope>NUCLEOTIDE SEQUENCE [LARGE SCALE GENOMIC DNA]</scope>
    <source>
        <strain>ATCC BAA-679 / EGD-e</strain>
    </source>
</reference>
<name>FDHD_LISMO</name>
<dbReference type="EMBL" id="AL591983">
    <property type="protein sequence ID" value="CAD00662.1"/>
    <property type="molecule type" value="Genomic_DNA"/>
</dbReference>
<dbReference type="PIR" id="AH1397">
    <property type="entry name" value="AH1397"/>
</dbReference>
<dbReference type="RefSeq" id="NP_466107.1">
    <property type="nucleotide sequence ID" value="NC_003210.1"/>
</dbReference>
<dbReference type="RefSeq" id="WP_010990022.1">
    <property type="nucleotide sequence ID" value="NZ_CP149495.1"/>
</dbReference>
<dbReference type="SMR" id="Q8Y471"/>
<dbReference type="STRING" id="169963.gene:17595295"/>
<dbReference type="PaxDb" id="169963-lmo2584"/>
<dbReference type="EnsemblBacteria" id="CAD00662">
    <property type="protein sequence ID" value="CAD00662"/>
    <property type="gene ID" value="CAD00662"/>
</dbReference>
<dbReference type="GeneID" id="987234"/>
<dbReference type="KEGG" id="lmo:lmo2584"/>
<dbReference type="PATRIC" id="fig|169963.11.peg.2648"/>
<dbReference type="eggNOG" id="COG1526">
    <property type="taxonomic scope" value="Bacteria"/>
</dbReference>
<dbReference type="HOGENOM" id="CLU_056887_4_1_9"/>
<dbReference type="OrthoDB" id="9782042at2"/>
<dbReference type="PhylomeDB" id="Q8Y471"/>
<dbReference type="BioCyc" id="LMON169963:LMO2584-MONOMER"/>
<dbReference type="Proteomes" id="UP000000817">
    <property type="component" value="Chromosome"/>
</dbReference>
<dbReference type="GO" id="GO:0005737">
    <property type="term" value="C:cytoplasm"/>
    <property type="evidence" value="ECO:0007669"/>
    <property type="project" value="UniProtKB-SubCell"/>
</dbReference>
<dbReference type="GO" id="GO:0097163">
    <property type="term" value="F:sulfur carrier activity"/>
    <property type="evidence" value="ECO:0007669"/>
    <property type="project" value="UniProtKB-UniRule"/>
</dbReference>
<dbReference type="GO" id="GO:0016783">
    <property type="term" value="F:sulfurtransferase activity"/>
    <property type="evidence" value="ECO:0007669"/>
    <property type="project" value="InterPro"/>
</dbReference>
<dbReference type="GO" id="GO:0006777">
    <property type="term" value="P:Mo-molybdopterin cofactor biosynthetic process"/>
    <property type="evidence" value="ECO:0007669"/>
    <property type="project" value="UniProtKB-UniRule"/>
</dbReference>
<dbReference type="Gene3D" id="3.10.20.10">
    <property type="match status" value="1"/>
</dbReference>
<dbReference type="Gene3D" id="3.40.140.10">
    <property type="entry name" value="Cytidine Deaminase, domain 2"/>
    <property type="match status" value="1"/>
</dbReference>
<dbReference type="HAMAP" id="MF_00187">
    <property type="entry name" value="FdhD"/>
    <property type="match status" value="1"/>
</dbReference>
<dbReference type="InterPro" id="IPR016193">
    <property type="entry name" value="Cytidine_deaminase-like"/>
</dbReference>
<dbReference type="InterPro" id="IPR003786">
    <property type="entry name" value="FdhD"/>
</dbReference>
<dbReference type="NCBIfam" id="TIGR00129">
    <property type="entry name" value="fdhD_narQ"/>
    <property type="match status" value="1"/>
</dbReference>
<dbReference type="PANTHER" id="PTHR30592">
    <property type="entry name" value="FORMATE DEHYDROGENASE"/>
    <property type="match status" value="1"/>
</dbReference>
<dbReference type="PANTHER" id="PTHR30592:SF1">
    <property type="entry name" value="SULFUR CARRIER PROTEIN FDHD"/>
    <property type="match status" value="1"/>
</dbReference>
<dbReference type="Pfam" id="PF02634">
    <property type="entry name" value="FdhD-NarQ"/>
    <property type="match status" value="1"/>
</dbReference>
<dbReference type="PIRSF" id="PIRSF015626">
    <property type="entry name" value="FdhD"/>
    <property type="match status" value="1"/>
</dbReference>
<dbReference type="SUPFAM" id="SSF53927">
    <property type="entry name" value="Cytidine deaminase-like"/>
    <property type="match status" value="1"/>
</dbReference>
<comment type="function">
    <text evidence="1">Required for formate dehydrogenase (FDH) activity. Acts as a sulfur carrier protein that transfers sulfur from IscS to the molybdenum cofactor prior to its insertion into FDH.</text>
</comment>
<comment type="subcellular location">
    <subcellularLocation>
        <location evidence="1">Cytoplasm</location>
    </subcellularLocation>
</comment>
<comment type="similarity">
    <text evidence="1">Belongs to the FdhD family.</text>
</comment>
<organism>
    <name type="scientific">Listeria monocytogenes serovar 1/2a (strain ATCC BAA-679 / EGD-e)</name>
    <dbReference type="NCBI Taxonomy" id="169963"/>
    <lineage>
        <taxon>Bacteria</taxon>
        <taxon>Bacillati</taxon>
        <taxon>Bacillota</taxon>
        <taxon>Bacilli</taxon>
        <taxon>Bacillales</taxon>
        <taxon>Listeriaceae</taxon>
        <taxon>Listeria</taxon>
    </lineage>
</organism>
<proteinExistence type="inferred from homology"/>
<protein>
    <recommendedName>
        <fullName evidence="1">Sulfur carrier protein FdhD</fullName>
    </recommendedName>
</protein>
<gene>
    <name evidence="1" type="primary">fdhD</name>
    <name type="ordered locus">lmo2584</name>
</gene>
<feature type="chain" id="PRO_0000152908" description="Sulfur carrier protein FdhD">
    <location>
        <begin position="1"/>
        <end position="261"/>
    </location>
</feature>
<feature type="active site" description="Cysteine persulfide intermediate" evidence="1">
    <location>
        <position position="105"/>
    </location>
</feature>
<feature type="binding site" evidence="1">
    <location>
        <begin position="245"/>
        <end position="250"/>
    </location>
    <ligand>
        <name>Mo-bis(molybdopterin guanine dinucleotide)</name>
        <dbReference type="ChEBI" id="CHEBI:60539"/>
    </ligand>
</feature>
<keyword id="KW-0963">Cytoplasm</keyword>
<keyword id="KW-0501">Molybdenum cofactor biosynthesis</keyword>
<keyword id="KW-1185">Reference proteome</keyword>
<sequence>MDIVSHQKIRRFEAGTFQEIESSVATEYPLTIYVNDQELVTIVCTPEYLEDLVVGFLTSEGIVRGPRDINSVDIIEATGHAKVSANFVNKFNAKYRGKRYITSCCGKSRENFYFQSDASLVNVKQNGNLQLTTDMIFRLMEKFEQNSATFHQTGGVHNAALCSSAEIIYSRMDIGRHNALDKIYGRALQDGTSTEDKAIIFSGRISSEILVKTAKLGCGIILSRSAPTELAINMAEELNITTVGFIRGDRLNVYSGFERIT</sequence>
<accession>Q8Y471</accession>
<evidence type="ECO:0000255" key="1">
    <source>
        <dbReference type="HAMAP-Rule" id="MF_00187"/>
    </source>
</evidence>